<accession>A5IJ65</accession>
<feature type="chain" id="PRO_1000006341" description="Serine hydroxymethyltransferase">
    <location>
        <begin position="1"/>
        <end position="427"/>
    </location>
</feature>
<feature type="binding site" evidence="1">
    <location>
        <position position="118"/>
    </location>
    <ligand>
        <name>(6S)-5,6,7,8-tetrahydrofolate</name>
        <dbReference type="ChEBI" id="CHEBI:57453"/>
    </ligand>
</feature>
<feature type="binding site" evidence="1">
    <location>
        <begin position="122"/>
        <end position="124"/>
    </location>
    <ligand>
        <name>(6S)-5,6,7,8-tetrahydrofolate</name>
        <dbReference type="ChEBI" id="CHEBI:57453"/>
    </ligand>
</feature>
<feature type="binding site" evidence="1">
    <location>
        <begin position="351"/>
        <end position="353"/>
    </location>
    <ligand>
        <name>(6S)-5,6,7,8-tetrahydrofolate</name>
        <dbReference type="ChEBI" id="CHEBI:57453"/>
    </ligand>
</feature>
<feature type="site" description="Plays an important role in substrate specificity" evidence="1">
    <location>
        <position position="226"/>
    </location>
</feature>
<feature type="modified residue" description="N6-(pyridoxal phosphate)lysine" evidence="1">
    <location>
        <position position="227"/>
    </location>
</feature>
<evidence type="ECO:0000255" key="1">
    <source>
        <dbReference type="HAMAP-Rule" id="MF_00051"/>
    </source>
</evidence>
<protein>
    <recommendedName>
        <fullName evidence="1">Serine hydroxymethyltransferase</fullName>
        <shortName evidence="1">SHMT</shortName>
        <shortName evidence="1">Serine methylase</shortName>
        <ecNumber evidence="1">2.1.2.1</ecNumber>
    </recommendedName>
</protein>
<reference key="1">
    <citation type="submission" date="2007-05" db="EMBL/GenBank/DDBJ databases">
        <title>Complete sequence of Thermotoga petrophila RKU-1.</title>
        <authorList>
            <consortium name="US DOE Joint Genome Institute"/>
            <person name="Copeland A."/>
            <person name="Lucas S."/>
            <person name="Lapidus A."/>
            <person name="Barry K."/>
            <person name="Glavina del Rio T."/>
            <person name="Dalin E."/>
            <person name="Tice H."/>
            <person name="Pitluck S."/>
            <person name="Sims D."/>
            <person name="Brettin T."/>
            <person name="Bruce D."/>
            <person name="Detter J.C."/>
            <person name="Han C."/>
            <person name="Tapia R."/>
            <person name="Schmutz J."/>
            <person name="Larimer F."/>
            <person name="Land M."/>
            <person name="Hauser L."/>
            <person name="Kyrpides N."/>
            <person name="Mikhailova N."/>
            <person name="Nelson K."/>
            <person name="Gogarten J.P."/>
            <person name="Noll K."/>
            <person name="Richardson P."/>
        </authorList>
    </citation>
    <scope>NUCLEOTIDE SEQUENCE [LARGE SCALE GENOMIC DNA]</scope>
    <source>
        <strain>ATCC BAA-488 / DSM 13995 / JCM 10881 / RKU-1</strain>
    </source>
</reference>
<dbReference type="EC" id="2.1.2.1" evidence="1"/>
<dbReference type="EMBL" id="CP000702">
    <property type="protein sequence ID" value="ABQ46238.1"/>
    <property type="molecule type" value="Genomic_DNA"/>
</dbReference>
<dbReference type="RefSeq" id="WP_011942892.1">
    <property type="nucleotide sequence ID" value="NC_009486.1"/>
</dbReference>
<dbReference type="SMR" id="A5IJ65"/>
<dbReference type="STRING" id="390874.Tpet_0209"/>
<dbReference type="KEGG" id="tpt:Tpet_0209"/>
<dbReference type="eggNOG" id="COG0112">
    <property type="taxonomic scope" value="Bacteria"/>
</dbReference>
<dbReference type="HOGENOM" id="CLU_022477_2_1_0"/>
<dbReference type="UniPathway" id="UPA00193"/>
<dbReference type="UniPathway" id="UPA00288">
    <property type="reaction ID" value="UER01023"/>
</dbReference>
<dbReference type="Proteomes" id="UP000006558">
    <property type="component" value="Chromosome"/>
</dbReference>
<dbReference type="GO" id="GO:0005829">
    <property type="term" value="C:cytosol"/>
    <property type="evidence" value="ECO:0007669"/>
    <property type="project" value="TreeGrafter"/>
</dbReference>
<dbReference type="GO" id="GO:0004372">
    <property type="term" value="F:glycine hydroxymethyltransferase activity"/>
    <property type="evidence" value="ECO:0007669"/>
    <property type="project" value="UniProtKB-UniRule"/>
</dbReference>
<dbReference type="GO" id="GO:0030170">
    <property type="term" value="F:pyridoxal phosphate binding"/>
    <property type="evidence" value="ECO:0007669"/>
    <property type="project" value="UniProtKB-UniRule"/>
</dbReference>
<dbReference type="GO" id="GO:0019264">
    <property type="term" value="P:glycine biosynthetic process from serine"/>
    <property type="evidence" value="ECO:0007669"/>
    <property type="project" value="UniProtKB-UniRule"/>
</dbReference>
<dbReference type="GO" id="GO:0035999">
    <property type="term" value="P:tetrahydrofolate interconversion"/>
    <property type="evidence" value="ECO:0007669"/>
    <property type="project" value="UniProtKB-UniRule"/>
</dbReference>
<dbReference type="CDD" id="cd00378">
    <property type="entry name" value="SHMT"/>
    <property type="match status" value="1"/>
</dbReference>
<dbReference type="FunFam" id="3.40.640.10:FF:000001">
    <property type="entry name" value="Serine hydroxymethyltransferase"/>
    <property type="match status" value="1"/>
</dbReference>
<dbReference type="FunFam" id="3.90.1150.10:FF:000003">
    <property type="entry name" value="Serine hydroxymethyltransferase"/>
    <property type="match status" value="1"/>
</dbReference>
<dbReference type="Gene3D" id="3.90.1150.10">
    <property type="entry name" value="Aspartate Aminotransferase, domain 1"/>
    <property type="match status" value="1"/>
</dbReference>
<dbReference type="Gene3D" id="3.40.640.10">
    <property type="entry name" value="Type I PLP-dependent aspartate aminotransferase-like (Major domain)"/>
    <property type="match status" value="1"/>
</dbReference>
<dbReference type="HAMAP" id="MF_00051">
    <property type="entry name" value="SHMT"/>
    <property type="match status" value="1"/>
</dbReference>
<dbReference type="InterPro" id="IPR015424">
    <property type="entry name" value="PyrdxlP-dep_Trfase"/>
</dbReference>
<dbReference type="InterPro" id="IPR015421">
    <property type="entry name" value="PyrdxlP-dep_Trfase_major"/>
</dbReference>
<dbReference type="InterPro" id="IPR015422">
    <property type="entry name" value="PyrdxlP-dep_Trfase_small"/>
</dbReference>
<dbReference type="InterPro" id="IPR001085">
    <property type="entry name" value="Ser_HO-MeTrfase"/>
</dbReference>
<dbReference type="InterPro" id="IPR049943">
    <property type="entry name" value="Ser_HO-MeTrfase-like"/>
</dbReference>
<dbReference type="InterPro" id="IPR019798">
    <property type="entry name" value="Ser_HO-MeTrfase_PLP_BS"/>
</dbReference>
<dbReference type="InterPro" id="IPR039429">
    <property type="entry name" value="SHMT-like_dom"/>
</dbReference>
<dbReference type="NCBIfam" id="NF000586">
    <property type="entry name" value="PRK00011.1"/>
    <property type="match status" value="1"/>
</dbReference>
<dbReference type="PANTHER" id="PTHR11680">
    <property type="entry name" value="SERINE HYDROXYMETHYLTRANSFERASE"/>
    <property type="match status" value="1"/>
</dbReference>
<dbReference type="PANTHER" id="PTHR11680:SF35">
    <property type="entry name" value="SERINE HYDROXYMETHYLTRANSFERASE 1"/>
    <property type="match status" value="1"/>
</dbReference>
<dbReference type="Pfam" id="PF00464">
    <property type="entry name" value="SHMT"/>
    <property type="match status" value="1"/>
</dbReference>
<dbReference type="PIRSF" id="PIRSF000412">
    <property type="entry name" value="SHMT"/>
    <property type="match status" value="1"/>
</dbReference>
<dbReference type="SUPFAM" id="SSF53383">
    <property type="entry name" value="PLP-dependent transferases"/>
    <property type="match status" value="1"/>
</dbReference>
<dbReference type="PROSITE" id="PS00096">
    <property type="entry name" value="SHMT"/>
    <property type="match status" value="1"/>
</dbReference>
<name>GLYA_THEP1</name>
<sequence>MWKHVKQVDPEIYEVLVNELKRQEYGLELIASENFASLAVIETMGSMLTNKYAEGYPQKRYYGGCEWVDRAEELAIERAKRLFGAKFANVQPHSGSQANMAVYLALAQPGDTIMGMSLSHGGHLTHGAPVNFSGKIFKVVPYGVNLETETIDYDEVRRLALEHKPKIIVAGGSAYARIIDFKRFREIADEVGAYLMVDMAHFAGLVAAGIHPNPLEYAHVVTSTTHKTLRGPRGGLILTNDPDIAKAVDKTIFPGIQGGPLMHVIAAKAVCFKEAMTEEFKEYQKQVVKNAKKMAEEFQKRGYRIVSGGTDTHLFLVDLTPKDITGKAAEKALESCGITVNKNTIPNEKRSPFVASGIRIGTPAVTTRGMKEEEMEEIAEMIDLVLSNVTDENGTVKPEVREEVSKRVRELCERFPLYRDKIEGVEI</sequence>
<gene>
    <name evidence="1" type="primary">glyA</name>
    <name type="ordered locus">Tpet_0209</name>
</gene>
<comment type="function">
    <text evidence="1">Catalyzes the reversible interconversion of serine and glycine with tetrahydrofolate (THF) serving as the one-carbon carrier. This reaction serves as the major source of one-carbon groups required for the biosynthesis of purines, thymidylate, methionine, and other important biomolecules. Also exhibits THF-independent aldolase activity toward beta-hydroxyamino acids, producing glycine and aldehydes, via a retro-aldol mechanism.</text>
</comment>
<comment type="catalytic activity">
    <reaction evidence="1">
        <text>(6R)-5,10-methylene-5,6,7,8-tetrahydrofolate + glycine + H2O = (6S)-5,6,7,8-tetrahydrofolate + L-serine</text>
        <dbReference type="Rhea" id="RHEA:15481"/>
        <dbReference type="ChEBI" id="CHEBI:15377"/>
        <dbReference type="ChEBI" id="CHEBI:15636"/>
        <dbReference type="ChEBI" id="CHEBI:33384"/>
        <dbReference type="ChEBI" id="CHEBI:57305"/>
        <dbReference type="ChEBI" id="CHEBI:57453"/>
        <dbReference type="EC" id="2.1.2.1"/>
    </reaction>
</comment>
<comment type="cofactor">
    <cofactor evidence="1">
        <name>pyridoxal 5'-phosphate</name>
        <dbReference type="ChEBI" id="CHEBI:597326"/>
    </cofactor>
</comment>
<comment type="pathway">
    <text evidence="1">One-carbon metabolism; tetrahydrofolate interconversion.</text>
</comment>
<comment type="pathway">
    <text evidence="1">Amino-acid biosynthesis; glycine biosynthesis; glycine from L-serine: step 1/1.</text>
</comment>
<comment type="subunit">
    <text evidence="1">Homodimer.</text>
</comment>
<comment type="subcellular location">
    <subcellularLocation>
        <location evidence="1">Cytoplasm</location>
    </subcellularLocation>
</comment>
<comment type="similarity">
    <text evidence="1">Belongs to the SHMT family.</text>
</comment>
<organism>
    <name type="scientific">Thermotoga petrophila (strain ATCC BAA-488 / DSM 13995 / JCM 10881 / RKU-1)</name>
    <dbReference type="NCBI Taxonomy" id="390874"/>
    <lineage>
        <taxon>Bacteria</taxon>
        <taxon>Thermotogati</taxon>
        <taxon>Thermotogota</taxon>
        <taxon>Thermotogae</taxon>
        <taxon>Thermotogales</taxon>
        <taxon>Thermotogaceae</taxon>
        <taxon>Thermotoga</taxon>
    </lineage>
</organism>
<keyword id="KW-0028">Amino-acid biosynthesis</keyword>
<keyword id="KW-0963">Cytoplasm</keyword>
<keyword id="KW-0554">One-carbon metabolism</keyword>
<keyword id="KW-0663">Pyridoxal phosphate</keyword>
<keyword id="KW-0808">Transferase</keyword>
<proteinExistence type="inferred from homology"/>